<reference key="1">
    <citation type="journal article" date="2008" name="DNA Res.">
        <title>Comparative genome analysis of Lactobacillus reuteri and Lactobacillus fermentum reveal a genomic island for reuterin and cobalamin production.</title>
        <authorList>
            <person name="Morita H."/>
            <person name="Toh H."/>
            <person name="Fukuda S."/>
            <person name="Horikawa H."/>
            <person name="Oshima K."/>
            <person name="Suzuki T."/>
            <person name="Murakami M."/>
            <person name="Hisamatsu S."/>
            <person name="Kato Y."/>
            <person name="Takizawa T."/>
            <person name="Fukuoka H."/>
            <person name="Yoshimura T."/>
            <person name="Itoh K."/>
            <person name="O'Sullivan D.J."/>
            <person name="McKay L.L."/>
            <person name="Ohno H."/>
            <person name="Kikuchi J."/>
            <person name="Masaoka T."/>
            <person name="Hattori M."/>
        </authorList>
    </citation>
    <scope>NUCLEOTIDE SEQUENCE [LARGE SCALE GENOMIC DNA]</scope>
    <source>
        <strain>JCM 1112</strain>
    </source>
</reference>
<accession>B2G9H5</accession>
<feature type="chain" id="PRO_1000093148" description="Glutamyl-tRNA reductase">
    <location>
        <begin position="1"/>
        <end position="421"/>
    </location>
</feature>
<feature type="active site" description="Nucleophile" evidence="1">
    <location>
        <position position="50"/>
    </location>
</feature>
<feature type="binding site" evidence="1">
    <location>
        <begin position="49"/>
        <end position="52"/>
    </location>
    <ligand>
        <name>substrate</name>
    </ligand>
</feature>
<feature type="binding site" evidence="1">
    <location>
        <position position="109"/>
    </location>
    <ligand>
        <name>substrate</name>
    </ligand>
</feature>
<feature type="binding site" evidence="1">
    <location>
        <begin position="114"/>
        <end position="116"/>
    </location>
    <ligand>
        <name>substrate</name>
    </ligand>
</feature>
<feature type="binding site" evidence="1">
    <location>
        <position position="120"/>
    </location>
    <ligand>
        <name>substrate</name>
    </ligand>
</feature>
<feature type="binding site" evidence="1">
    <location>
        <begin position="189"/>
        <end position="194"/>
    </location>
    <ligand>
        <name>NADP(+)</name>
        <dbReference type="ChEBI" id="CHEBI:58349"/>
    </ligand>
</feature>
<feature type="site" description="Important for activity" evidence="1">
    <location>
        <position position="99"/>
    </location>
</feature>
<protein>
    <recommendedName>
        <fullName evidence="1">Glutamyl-tRNA reductase</fullName>
        <shortName evidence="1">GluTR</shortName>
        <ecNumber evidence="1">1.2.1.70</ecNumber>
    </recommendedName>
</protein>
<proteinExistence type="inferred from homology"/>
<keyword id="KW-0521">NADP</keyword>
<keyword id="KW-0560">Oxidoreductase</keyword>
<keyword id="KW-0627">Porphyrin biosynthesis</keyword>
<name>HEM1_LIMRJ</name>
<organism>
    <name type="scientific">Limosilactobacillus reuteri subsp. reuteri (strain JCM 1112)</name>
    <name type="common">Lactobacillus reuteri</name>
    <dbReference type="NCBI Taxonomy" id="557433"/>
    <lineage>
        <taxon>Bacteria</taxon>
        <taxon>Bacillati</taxon>
        <taxon>Bacillota</taxon>
        <taxon>Bacilli</taxon>
        <taxon>Lactobacillales</taxon>
        <taxon>Lactobacillaceae</taxon>
        <taxon>Limosilactobacillus</taxon>
    </lineage>
</organism>
<sequence>MYLMCVSLNYHQLPLDLREKFSFTKEEVPKADKLLNDEKSILENLLISTCNRTEVYAVVDQIHTGRYYIRRFLAEWFHYTIDDFTKFVTVTTKDAVAEHLFKVITGLDSLIKGEPQILGQMKDAFQIATKEGTTGAILNHLFRQAITFSKRMHTKYRVSELAQSSGQAGLHQIKMQFGSLEGKTLAVVGLGQIGKHTAYNASNMGFSKVLLLNRTDSKAEQIATELQGVVEARPFNQLATVVHNVDAAIFAATVKQPLFKADEQISTMIVDLGVPRNVAVNSTKLKYYDVDHVHMILNSNDEKRRLMIQKIANEIPQEVNDFYIWEKQLHIVPVIRGLREHSLRIEGEAYDSLLRKLPELDSHERKVISKHMKSIVNQMIKGPIKEIKELSVTPGATADIDFFCKIFGMDNLKVENQNNDK</sequence>
<gene>
    <name evidence="1" type="primary">hemA</name>
    <name type="ordered locus">LAR_1591</name>
</gene>
<dbReference type="EC" id="1.2.1.70" evidence="1"/>
<dbReference type="EMBL" id="AP007281">
    <property type="protein sequence ID" value="BAG26107.1"/>
    <property type="molecule type" value="Genomic_DNA"/>
</dbReference>
<dbReference type="RefSeq" id="WP_011953572.1">
    <property type="nucleotide sequence ID" value="NC_010609.1"/>
</dbReference>
<dbReference type="SMR" id="B2G9H5"/>
<dbReference type="KEGG" id="lrf:LAR_1591"/>
<dbReference type="HOGENOM" id="CLU_035113_2_2_9"/>
<dbReference type="UniPathway" id="UPA00251">
    <property type="reaction ID" value="UER00316"/>
</dbReference>
<dbReference type="GO" id="GO:0008883">
    <property type="term" value="F:glutamyl-tRNA reductase activity"/>
    <property type="evidence" value="ECO:0007669"/>
    <property type="project" value="UniProtKB-UniRule"/>
</dbReference>
<dbReference type="GO" id="GO:0050661">
    <property type="term" value="F:NADP binding"/>
    <property type="evidence" value="ECO:0007669"/>
    <property type="project" value="InterPro"/>
</dbReference>
<dbReference type="GO" id="GO:0006782">
    <property type="term" value="P:protoporphyrinogen IX biosynthetic process"/>
    <property type="evidence" value="ECO:0007669"/>
    <property type="project" value="UniProtKB-UniRule"/>
</dbReference>
<dbReference type="FunFam" id="3.30.460.30:FF:000001">
    <property type="entry name" value="Glutamyl-tRNA reductase"/>
    <property type="match status" value="1"/>
</dbReference>
<dbReference type="Gene3D" id="3.30.460.30">
    <property type="entry name" value="Glutamyl-tRNA reductase, N-terminal domain"/>
    <property type="match status" value="1"/>
</dbReference>
<dbReference type="Gene3D" id="3.40.50.720">
    <property type="entry name" value="NAD(P)-binding Rossmann-like Domain"/>
    <property type="match status" value="1"/>
</dbReference>
<dbReference type="HAMAP" id="MF_00087">
    <property type="entry name" value="Glu_tRNA_reductase"/>
    <property type="match status" value="1"/>
</dbReference>
<dbReference type="InterPro" id="IPR000343">
    <property type="entry name" value="4pyrrol_synth_GluRdtase"/>
</dbReference>
<dbReference type="InterPro" id="IPR015896">
    <property type="entry name" value="4pyrrol_synth_GluRdtase_dimer"/>
</dbReference>
<dbReference type="InterPro" id="IPR015895">
    <property type="entry name" value="4pyrrol_synth_GluRdtase_N"/>
</dbReference>
<dbReference type="InterPro" id="IPR018214">
    <property type="entry name" value="GluRdtase_CS"/>
</dbReference>
<dbReference type="InterPro" id="IPR036453">
    <property type="entry name" value="GluRdtase_dimer_dom_sf"/>
</dbReference>
<dbReference type="InterPro" id="IPR036343">
    <property type="entry name" value="GluRdtase_N_sf"/>
</dbReference>
<dbReference type="InterPro" id="IPR036291">
    <property type="entry name" value="NAD(P)-bd_dom_sf"/>
</dbReference>
<dbReference type="InterPro" id="IPR006151">
    <property type="entry name" value="Shikm_DH/Glu-tRNA_Rdtase"/>
</dbReference>
<dbReference type="NCBIfam" id="TIGR01035">
    <property type="entry name" value="hemA"/>
    <property type="match status" value="1"/>
</dbReference>
<dbReference type="PANTHER" id="PTHR43120">
    <property type="entry name" value="GLUTAMYL-TRNA REDUCTASE 1, CHLOROPLASTIC"/>
    <property type="match status" value="1"/>
</dbReference>
<dbReference type="PANTHER" id="PTHR43120:SF1">
    <property type="entry name" value="GLUTAMYL-TRNA REDUCTASE 1, CHLOROPLASTIC"/>
    <property type="match status" value="1"/>
</dbReference>
<dbReference type="Pfam" id="PF00745">
    <property type="entry name" value="GlutR_dimer"/>
    <property type="match status" value="1"/>
</dbReference>
<dbReference type="Pfam" id="PF05201">
    <property type="entry name" value="GlutR_N"/>
    <property type="match status" value="1"/>
</dbReference>
<dbReference type="Pfam" id="PF01488">
    <property type="entry name" value="Shikimate_DH"/>
    <property type="match status" value="1"/>
</dbReference>
<dbReference type="PIRSF" id="PIRSF000445">
    <property type="entry name" value="4pyrrol_synth_GluRdtase"/>
    <property type="match status" value="1"/>
</dbReference>
<dbReference type="SUPFAM" id="SSF69742">
    <property type="entry name" value="Glutamyl tRNA-reductase catalytic, N-terminal domain"/>
    <property type="match status" value="1"/>
</dbReference>
<dbReference type="SUPFAM" id="SSF69075">
    <property type="entry name" value="Glutamyl tRNA-reductase dimerization domain"/>
    <property type="match status" value="1"/>
</dbReference>
<dbReference type="SUPFAM" id="SSF51735">
    <property type="entry name" value="NAD(P)-binding Rossmann-fold domains"/>
    <property type="match status" value="1"/>
</dbReference>
<dbReference type="PROSITE" id="PS00747">
    <property type="entry name" value="GLUTR"/>
    <property type="match status" value="1"/>
</dbReference>
<comment type="function">
    <text evidence="1">Catalyzes the NADPH-dependent reduction of glutamyl-tRNA(Glu) to glutamate 1-semialdehyde (GSA).</text>
</comment>
<comment type="catalytic activity">
    <reaction evidence="1">
        <text>(S)-4-amino-5-oxopentanoate + tRNA(Glu) + NADP(+) = L-glutamyl-tRNA(Glu) + NADPH + H(+)</text>
        <dbReference type="Rhea" id="RHEA:12344"/>
        <dbReference type="Rhea" id="RHEA-COMP:9663"/>
        <dbReference type="Rhea" id="RHEA-COMP:9680"/>
        <dbReference type="ChEBI" id="CHEBI:15378"/>
        <dbReference type="ChEBI" id="CHEBI:57501"/>
        <dbReference type="ChEBI" id="CHEBI:57783"/>
        <dbReference type="ChEBI" id="CHEBI:58349"/>
        <dbReference type="ChEBI" id="CHEBI:78442"/>
        <dbReference type="ChEBI" id="CHEBI:78520"/>
        <dbReference type="EC" id="1.2.1.70"/>
    </reaction>
</comment>
<comment type="pathway">
    <text evidence="1">Porphyrin-containing compound metabolism; protoporphyrin-IX biosynthesis; 5-aminolevulinate from L-glutamyl-tRNA(Glu): step 1/2.</text>
</comment>
<comment type="subunit">
    <text evidence="1">Homodimer.</text>
</comment>
<comment type="domain">
    <text evidence="1">Possesses an unusual extended V-shaped dimeric structure with each monomer consisting of three distinct domains arranged along a curved 'spinal' alpha-helix. The N-terminal catalytic domain specifically recognizes the glutamate moiety of the substrate. The second domain is the NADPH-binding domain, and the third C-terminal domain is responsible for dimerization.</text>
</comment>
<comment type="miscellaneous">
    <text evidence="1">During catalysis, the active site Cys acts as a nucleophile attacking the alpha-carbonyl group of tRNA-bound glutamate with the formation of a thioester intermediate between enzyme and glutamate, and the concomitant release of tRNA(Glu). The thioester intermediate is finally reduced by direct hydride transfer from NADPH, to form the product GSA.</text>
</comment>
<comment type="similarity">
    <text evidence="1">Belongs to the glutamyl-tRNA reductase family.</text>
</comment>
<evidence type="ECO:0000255" key="1">
    <source>
        <dbReference type="HAMAP-Rule" id="MF_00087"/>
    </source>
</evidence>